<feature type="initiator methionine" description="Removed" evidence="2">
    <location>
        <position position="1"/>
    </location>
</feature>
<feature type="chain" id="PRO_0000270834" description="Target of EGR1 protein 1">
    <location>
        <begin position="2"/>
        <end position="511"/>
    </location>
</feature>
<feature type="zinc finger region" description="C3H1-type" evidence="3">
    <location>
        <begin position="295"/>
        <end position="323"/>
    </location>
</feature>
<feature type="region of interest" description="Disordered" evidence="4">
    <location>
        <begin position="1"/>
        <end position="24"/>
    </location>
</feature>
<feature type="region of interest" description="Disordered" evidence="4">
    <location>
        <begin position="334"/>
        <end position="410"/>
    </location>
</feature>
<feature type="short sequence motif" description="Nuclear localization signal" evidence="1">
    <location>
        <begin position="336"/>
        <end position="348"/>
    </location>
</feature>
<feature type="compositionally biased region" description="Basic residues" evidence="4">
    <location>
        <begin position="337"/>
        <end position="349"/>
    </location>
</feature>
<feature type="compositionally biased region" description="Polar residues" evidence="4">
    <location>
        <begin position="350"/>
        <end position="359"/>
    </location>
</feature>
<feature type="compositionally biased region" description="Basic and acidic residues" evidence="4">
    <location>
        <begin position="377"/>
        <end position="387"/>
    </location>
</feature>
<feature type="compositionally biased region" description="Basic and acidic residues" evidence="4">
    <location>
        <begin position="395"/>
        <end position="410"/>
    </location>
</feature>
<feature type="modified residue" description="N-acetylalanine" evidence="2">
    <location>
        <position position="2"/>
    </location>
</feature>
<feature type="modified residue" description="Phosphoserine" evidence="2">
    <location>
        <position position="5"/>
    </location>
</feature>
<feature type="modified residue" description="Phosphoserine" evidence="7 8">
    <location>
        <position position="349"/>
    </location>
</feature>
<feature type="modified residue" description="Phosphoserine" evidence="2">
    <location>
        <position position="429"/>
    </location>
</feature>
<feature type="splice variant" id="VSP_022242" description="In isoform 2." evidence="5">
    <original>AYGWCPLGPQCPQSHDIDLIIDTD</original>
    <variation>HTRSRFTGQLWETTIFPVEKLKDI</variation>
    <location>
        <begin position="306"/>
        <end position="329"/>
    </location>
</feature>
<feature type="splice variant" id="VSP_022243" description="In isoform 2." evidence="5">
    <location>
        <begin position="330"/>
        <end position="511"/>
    </location>
</feature>
<feature type="sequence conflict" description="In Ref. 2; AAH23109." evidence="6" ref="2">
    <original>D</original>
    <variation>G</variation>
    <location>
        <position position="8"/>
    </location>
</feature>
<feature type="sequence conflict" description="In Ref. 2; AAH23109." evidence="6" ref="2">
    <original>P</original>
    <variation>S</variation>
    <location>
        <position position="15"/>
    </location>
</feature>
<feature type="sequence conflict" description="In Ref. 2; AAH23109." evidence="6" ref="2">
    <original>P</original>
    <variation>S</variation>
    <location>
        <position position="26"/>
    </location>
</feature>
<feature type="sequence conflict" description="In Ref. 2; AAH23109." evidence="6" ref="2">
    <original>I</original>
    <variation>M</variation>
    <location>
        <position position="128"/>
    </location>
</feature>
<feature type="sequence conflict" description="In Ref. 1; BAB30482." evidence="6" ref="1">
    <original>R</original>
    <variation>W</variation>
    <location>
        <position position="182"/>
    </location>
</feature>
<feature type="sequence conflict" description="In Ref. 2; AAH23109." evidence="6" ref="2">
    <original>S</original>
    <variation>R</variation>
    <location>
        <position position="278"/>
    </location>
</feature>
<feature type="sequence conflict" description="In Ref. 2; AAH23109." evidence="6" ref="2">
    <original>A</original>
    <variation>V</variation>
    <location>
        <position position="360"/>
    </location>
</feature>
<reference key="1">
    <citation type="journal article" date="2005" name="Science">
        <title>The transcriptional landscape of the mammalian genome.</title>
        <authorList>
            <person name="Carninci P."/>
            <person name="Kasukawa T."/>
            <person name="Katayama S."/>
            <person name="Gough J."/>
            <person name="Frith M.C."/>
            <person name="Maeda N."/>
            <person name="Oyama R."/>
            <person name="Ravasi T."/>
            <person name="Lenhard B."/>
            <person name="Wells C."/>
            <person name="Kodzius R."/>
            <person name="Shimokawa K."/>
            <person name="Bajic V.B."/>
            <person name="Brenner S.E."/>
            <person name="Batalov S."/>
            <person name="Forrest A.R."/>
            <person name="Zavolan M."/>
            <person name="Davis M.J."/>
            <person name="Wilming L.G."/>
            <person name="Aidinis V."/>
            <person name="Allen J.E."/>
            <person name="Ambesi-Impiombato A."/>
            <person name="Apweiler R."/>
            <person name="Aturaliya R.N."/>
            <person name="Bailey T.L."/>
            <person name="Bansal M."/>
            <person name="Baxter L."/>
            <person name="Beisel K.W."/>
            <person name="Bersano T."/>
            <person name="Bono H."/>
            <person name="Chalk A.M."/>
            <person name="Chiu K.P."/>
            <person name="Choudhary V."/>
            <person name="Christoffels A."/>
            <person name="Clutterbuck D.R."/>
            <person name="Crowe M.L."/>
            <person name="Dalla E."/>
            <person name="Dalrymple B.P."/>
            <person name="de Bono B."/>
            <person name="Della Gatta G."/>
            <person name="di Bernardo D."/>
            <person name="Down T."/>
            <person name="Engstrom P."/>
            <person name="Fagiolini M."/>
            <person name="Faulkner G."/>
            <person name="Fletcher C.F."/>
            <person name="Fukushima T."/>
            <person name="Furuno M."/>
            <person name="Futaki S."/>
            <person name="Gariboldi M."/>
            <person name="Georgii-Hemming P."/>
            <person name="Gingeras T.R."/>
            <person name="Gojobori T."/>
            <person name="Green R.E."/>
            <person name="Gustincich S."/>
            <person name="Harbers M."/>
            <person name="Hayashi Y."/>
            <person name="Hensch T.K."/>
            <person name="Hirokawa N."/>
            <person name="Hill D."/>
            <person name="Huminiecki L."/>
            <person name="Iacono M."/>
            <person name="Ikeo K."/>
            <person name="Iwama A."/>
            <person name="Ishikawa T."/>
            <person name="Jakt M."/>
            <person name="Kanapin A."/>
            <person name="Katoh M."/>
            <person name="Kawasawa Y."/>
            <person name="Kelso J."/>
            <person name="Kitamura H."/>
            <person name="Kitano H."/>
            <person name="Kollias G."/>
            <person name="Krishnan S.P."/>
            <person name="Kruger A."/>
            <person name="Kummerfeld S.K."/>
            <person name="Kurochkin I.V."/>
            <person name="Lareau L.F."/>
            <person name="Lazarevic D."/>
            <person name="Lipovich L."/>
            <person name="Liu J."/>
            <person name="Liuni S."/>
            <person name="McWilliam S."/>
            <person name="Madan Babu M."/>
            <person name="Madera M."/>
            <person name="Marchionni L."/>
            <person name="Matsuda H."/>
            <person name="Matsuzawa S."/>
            <person name="Miki H."/>
            <person name="Mignone F."/>
            <person name="Miyake S."/>
            <person name="Morris K."/>
            <person name="Mottagui-Tabar S."/>
            <person name="Mulder N."/>
            <person name="Nakano N."/>
            <person name="Nakauchi H."/>
            <person name="Ng P."/>
            <person name="Nilsson R."/>
            <person name="Nishiguchi S."/>
            <person name="Nishikawa S."/>
            <person name="Nori F."/>
            <person name="Ohara O."/>
            <person name="Okazaki Y."/>
            <person name="Orlando V."/>
            <person name="Pang K.C."/>
            <person name="Pavan W.J."/>
            <person name="Pavesi G."/>
            <person name="Pesole G."/>
            <person name="Petrovsky N."/>
            <person name="Piazza S."/>
            <person name="Reed J."/>
            <person name="Reid J.F."/>
            <person name="Ring B.Z."/>
            <person name="Ringwald M."/>
            <person name="Rost B."/>
            <person name="Ruan Y."/>
            <person name="Salzberg S.L."/>
            <person name="Sandelin A."/>
            <person name="Schneider C."/>
            <person name="Schoenbach C."/>
            <person name="Sekiguchi K."/>
            <person name="Semple C.A."/>
            <person name="Seno S."/>
            <person name="Sessa L."/>
            <person name="Sheng Y."/>
            <person name="Shibata Y."/>
            <person name="Shimada H."/>
            <person name="Shimada K."/>
            <person name="Silva D."/>
            <person name="Sinclair B."/>
            <person name="Sperling S."/>
            <person name="Stupka E."/>
            <person name="Sugiura K."/>
            <person name="Sultana R."/>
            <person name="Takenaka Y."/>
            <person name="Taki K."/>
            <person name="Tammoja K."/>
            <person name="Tan S.L."/>
            <person name="Tang S."/>
            <person name="Taylor M.S."/>
            <person name="Tegner J."/>
            <person name="Teichmann S.A."/>
            <person name="Ueda H.R."/>
            <person name="van Nimwegen E."/>
            <person name="Verardo R."/>
            <person name="Wei C.L."/>
            <person name="Yagi K."/>
            <person name="Yamanishi H."/>
            <person name="Zabarovsky E."/>
            <person name="Zhu S."/>
            <person name="Zimmer A."/>
            <person name="Hide W."/>
            <person name="Bult C."/>
            <person name="Grimmond S.M."/>
            <person name="Teasdale R.D."/>
            <person name="Liu E.T."/>
            <person name="Brusic V."/>
            <person name="Quackenbush J."/>
            <person name="Wahlestedt C."/>
            <person name="Mattick J.S."/>
            <person name="Hume D.A."/>
            <person name="Kai C."/>
            <person name="Sasaki D."/>
            <person name="Tomaru Y."/>
            <person name="Fukuda S."/>
            <person name="Kanamori-Katayama M."/>
            <person name="Suzuki M."/>
            <person name="Aoki J."/>
            <person name="Arakawa T."/>
            <person name="Iida J."/>
            <person name="Imamura K."/>
            <person name="Itoh M."/>
            <person name="Kato T."/>
            <person name="Kawaji H."/>
            <person name="Kawagashira N."/>
            <person name="Kawashima T."/>
            <person name="Kojima M."/>
            <person name="Kondo S."/>
            <person name="Konno H."/>
            <person name="Nakano K."/>
            <person name="Ninomiya N."/>
            <person name="Nishio T."/>
            <person name="Okada M."/>
            <person name="Plessy C."/>
            <person name="Shibata K."/>
            <person name="Shiraki T."/>
            <person name="Suzuki S."/>
            <person name="Tagami M."/>
            <person name="Waki K."/>
            <person name="Watahiki A."/>
            <person name="Okamura-Oho Y."/>
            <person name="Suzuki H."/>
            <person name="Kawai J."/>
            <person name="Hayashizaki Y."/>
        </authorList>
    </citation>
    <scope>NUCLEOTIDE SEQUENCE [LARGE SCALE MRNA] (ISOFORMS 1 AND 2)</scope>
    <source>
        <strain>C57BL/6J</strain>
        <tissue>Adipose tissue</tissue>
        <tissue>Spinal cord</tissue>
        <tissue>Sympathetic ganglion</tissue>
        <tissue>Testis</tissue>
    </source>
</reference>
<reference key="2">
    <citation type="journal article" date="2004" name="Genome Res.">
        <title>The status, quality, and expansion of the NIH full-length cDNA project: the Mammalian Gene Collection (MGC).</title>
        <authorList>
            <consortium name="The MGC Project Team"/>
        </authorList>
    </citation>
    <scope>NUCLEOTIDE SEQUENCE [LARGE SCALE MRNA] (ISOFORM 1)</scope>
    <source>
        <strain>Czech II</strain>
        <tissue>Mammary gland</tissue>
    </source>
</reference>
<reference key="3">
    <citation type="journal article" date="2007" name="Proc. Natl. Acad. Sci. U.S.A.">
        <title>Large-scale phosphorylation analysis of mouse liver.</title>
        <authorList>
            <person name="Villen J."/>
            <person name="Beausoleil S.A."/>
            <person name="Gerber S.A."/>
            <person name="Gygi S.P."/>
        </authorList>
    </citation>
    <scope>PHOSPHORYLATION [LARGE SCALE ANALYSIS] AT SER-349</scope>
    <scope>IDENTIFICATION BY MASS SPECTROMETRY [LARGE SCALE ANALYSIS]</scope>
    <source>
        <tissue>Liver</tissue>
    </source>
</reference>
<reference key="4">
    <citation type="journal article" date="2010" name="Cell">
        <title>A tissue-specific atlas of mouse protein phosphorylation and expression.</title>
        <authorList>
            <person name="Huttlin E.L."/>
            <person name="Jedrychowski M.P."/>
            <person name="Elias J.E."/>
            <person name="Goswami T."/>
            <person name="Rad R."/>
            <person name="Beausoleil S.A."/>
            <person name="Villen J."/>
            <person name="Haas W."/>
            <person name="Sowa M.E."/>
            <person name="Gygi S.P."/>
        </authorList>
    </citation>
    <scope>PHOSPHORYLATION [LARGE SCALE ANALYSIS] AT SER-349</scope>
    <scope>IDENTIFICATION BY MASS SPECTROMETRY [LARGE SCALE ANALYSIS]</scope>
    <source>
        <tissue>Kidney</tissue>
        <tissue>Lung</tissue>
        <tissue>Pancreas</tissue>
        <tissue>Spleen</tissue>
        <tissue>Testis</tissue>
    </source>
</reference>
<organism>
    <name type="scientific">Mus musculus</name>
    <name type="common">Mouse</name>
    <dbReference type="NCBI Taxonomy" id="10090"/>
    <lineage>
        <taxon>Eukaryota</taxon>
        <taxon>Metazoa</taxon>
        <taxon>Chordata</taxon>
        <taxon>Craniata</taxon>
        <taxon>Vertebrata</taxon>
        <taxon>Euteleostomi</taxon>
        <taxon>Mammalia</taxon>
        <taxon>Eutheria</taxon>
        <taxon>Euarchontoglires</taxon>
        <taxon>Glires</taxon>
        <taxon>Rodentia</taxon>
        <taxon>Myomorpha</taxon>
        <taxon>Muroidea</taxon>
        <taxon>Muridae</taxon>
        <taxon>Murinae</taxon>
        <taxon>Mus</taxon>
        <taxon>Mus</taxon>
    </lineage>
</organism>
<gene>
    <name type="primary">Toe1</name>
</gene>
<proteinExistence type="evidence at protein level"/>
<evidence type="ECO:0000250" key="1"/>
<evidence type="ECO:0000250" key="2">
    <source>
        <dbReference type="UniProtKB" id="Q96GM8"/>
    </source>
</evidence>
<evidence type="ECO:0000255" key="3">
    <source>
        <dbReference type="PROSITE-ProRule" id="PRU00723"/>
    </source>
</evidence>
<evidence type="ECO:0000256" key="4">
    <source>
        <dbReference type="SAM" id="MobiDB-lite"/>
    </source>
</evidence>
<evidence type="ECO:0000303" key="5">
    <source>
    </source>
</evidence>
<evidence type="ECO:0000305" key="6"/>
<evidence type="ECO:0007744" key="7">
    <source>
    </source>
</evidence>
<evidence type="ECO:0007744" key="8">
    <source>
    </source>
</evidence>
<comment type="function">
    <text evidence="2">Inhibits cell growth rate and cell cycle. Induces CDKN1A expression as well as TGF-beta expression. Mediates the inhibitory growth effect of EGR1. Involved in the maturation of snRNAs and snRNA 3'-tail processing.</text>
</comment>
<comment type="subunit">
    <text evidence="2">Interacts with U1, U2, U4, U5 and U6 snRNAs.</text>
</comment>
<comment type="subcellular location">
    <subcellularLocation>
        <location evidence="2">Nucleus</location>
        <location evidence="2">Nucleolus</location>
    </subcellularLocation>
    <subcellularLocation>
        <location evidence="2">Nucleus speckle</location>
    </subcellularLocation>
    <text evidence="2">Localizes to nuclear speckles.</text>
</comment>
<comment type="alternative products">
    <event type="alternative splicing"/>
    <isoform>
        <id>Q9D2E2-1</id>
        <name>1</name>
        <sequence type="displayed"/>
    </isoform>
    <isoform>
        <id>Q9D2E2-2</id>
        <name>2</name>
        <sequence type="described" ref="VSP_022242 VSP_022243"/>
    </isoform>
</comment>
<comment type="similarity">
    <text evidence="6">Belongs to the CAF1 family.</text>
</comment>
<name>TOE1_MOUSE</name>
<sequence length="511" mass="56871">MAADSDDDVPPVPTPSDGGVNKNTQPAEEFVVRVPVVDVQSDNFKEIWPSLLLALKTASFVAVDTELSGLGDRKSLLNQCIEERYKAVCHAARTRSVLSLGLACFRQQPDKGENSYLAQVFNLTLLCIEEYVIEPKSVQFLVQHGFNFNRQYAQGIPYHKGNDKGDESQSQSVRTLFLELIRARRPLVLHNGLIDLVFLYQNFYAHLPENLGTFTADLCEMFPAGIYDTKYAAEFHARFVASYLEYAFRKCERENGKQRAAGSPHLALEFCSYPSSMSGHIDYRCCMSPGTCRRSRTTGICDKFSAYGWCPLGPQCPQSHDIDLIIDTDEAVAEDKRRRRRRKDKRKRSLQSQPGTQTLAEAEDGPPTKQVCEDSLETEKMEQKVAEGEAGDQPGSREGHTSSLEMAHRRTSAETADVATSELLVNQASTNPVPGDGLHRAGFDAFMTGYVMAYVGLSQGLQLCSSEPWLPECHNKVYLSGKTVPLTVTKSQFSRPSKAHNQKMKLAWGSS</sequence>
<accession>Q9D2E2</accession>
<accession>Q3UFD8</accession>
<accession>Q8R5A4</accession>
<accession>Q9D412</accession>
<protein>
    <recommendedName>
        <fullName>Target of EGR1 protein 1</fullName>
    </recommendedName>
</protein>
<dbReference type="EMBL" id="AK016889">
    <property type="protein sequence ID" value="BAB30482.1"/>
    <property type="molecule type" value="mRNA"/>
</dbReference>
<dbReference type="EMBL" id="AK019829">
    <property type="protein sequence ID" value="BAB31871.1"/>
    <property type="molecule type" value="mRNA"/>
</dbReference>
<dbReference type="EMBL" id="AK046576">
    <property type="protein sequence ID" value="BAC32792.1"/>
    <property type="molecule type" value="mRNA"/>
</dbReference>
<dbReference type="EMBL" id="AK082975">
    <property type="protein sequence ID" value="BAC38718.1"/>
    <property type="molecule type" value="mRNA"/>
</dbReference>
<dbReference type="EMBL" id="AK148609">
    <property type="protein sequence ID" value="BAE28623.1"/>
    <property type="molecule type" value="mRNA"/>
</dbReference>
<dbReference type="EMBL" id="BC023109">
    <property type="protein sequence ID" value="AAH23109.1"/>
    <property type="molecule type" value="mRNA"/>
</dbReference>
<dbReference type="CCDS" id="CCDS18517.1">
    <molecule id="Q9D2E2-1"/>
</dbReference>
<dbReference type="RefSeq" id="NP_080930.1">
    <molecule id="Q9D2E2-1"/>
    <property type="nucleotide sequence ID" value="NM_026654.3"/>
</dbReference>
<dbReference type="SMR" id="Q9D2E2"/>
<dbReference type="BioGRID" id="212779">
    <property type="interactions" value="2"/>
</dbReference>
<dbReference type="FunCoup" id="Q9D2E2">
    <property type="interactions" value="4084"/>
</dbReference>
<dbReference type="IntAct" id="Q9D2E2">
    <property type="interactions" value="2"/>
</dbReference>
<dbReference type="STRING" id="10090.ENSMUSP00000030451"/>
<dbReference type="GlyGen" id="Q9D2E2">
    <property type="glycosylation" value="2 sites, 1 O-linked glycan (1 site)"/>
</dbReference>
<dbReference type="iPTMnet" id="Q9D2E2"/>
<dbReference type="PhosphoSitePlus" id="Q9D2E2"/>
<dbReference type="SwissPalm" id="Q9D2E2"/>
<dbReference type="jPOST" id="Q9D2E2"/>
<dbReference type="PaxDb" id="10090-ENSMUSP00000030451"/>
<dbReference type="PeptideAtlas" id="Q9D2E2"/>
<dbReference type="ProteomicsDB" id="259486">
    <molecule id="Q9D2E2-1"/>
</dbReference>
<dbReference type="ProteomicsDB" id="259487">
    <molecule id="Q9D2E2-2"/>
</dbReference>
<dbReference type="Pumba" id="Q9D2E2"/>
<dbReference type="Antibodypedia" id="18606">
    <property type="antibodies" value="195 antibodies from 29 providers"/>
</dbReference>
<dbReference type="Ensembl" id="ENSMUST00000030451.10">
    <molecule id="Q9D2E2-1"/>
    <property type="protein sequence ID" value="ENSMUSP00000030451.4"/>
    <property type="gene ID" value="ENSMUSG00000028688.14"/>
</dbReference>
<dbReference type="Ensembl" id="ENSMUST00000106455.8">
    <molecule id="Q9D2E2-2"/>
    <property type="protein sequence ID" value="ENSMUSP00000102063.2"/>
    <property type="gene ID" value="ENSMUSG00000028688.14"/>
</dbReference>
<dbReference type="GeneID" id="68276"/>
<dbReference type="KEGG" id="mmu:68276"/>
<dbReference type="UCSC" id="uc008uhk.1">
    <molecule id="Q9D2E2-1"/>
    <property type="organism name" value="mouse"/>
</dbReference>
<dbReference type="AGR" id="MGI:1915526"/>
<dbReference type="CTD" id="114034"/>
<dbReference type="MGI" id="MGI:1915526">
    <property type="gene designation" value="Toe1"/>
</dbReference>
<dbReference type="VEuPathDB" id="HostDB:ENSMUSG00000028688"/>
<dbReference type="eggNOG" id="KOG1990">
    <property type="taxonomic scope" value="Eukaryota"/>
</dbReference>
<dbReference type="GeneTree" id="ENSGT00940000153167"/>
<dbReference type="HOGENOM" id="CLU_044804_1_0_1"/>
<dbReference type="InParanoid" id="Q9D2E2"/>
<dbReference type="OMA" id="RCCMPPT"/>
<dbReference type="OrthoDB" id="414075at2759"/>
<dbReference type="PhylomeDB" id="Q9D2E2"/>
<dbReference type="TreeFam" id="TF314502"/>
<dbReference type="BioGRID-ORCS" id="68276">
    <property type="hits" value="27 hits in 81 CRISPR screens"/>
</dbReference>
<dbReference type="ChiTaRS" id="Toe1">
    <property type="organism name" value="mouse"/>
</dbReference>
<dbReference type="PRO" id="PR:Q9D2E2"/>
<dbReference type="Proteomes" id="UP000000589">
    <property type="component" value="Chromosome 4"/>
</dbReference>
<dbReference type="RNAct" id="Q9D2E2">
    <property type="molecule type" value="protein"/>
</dbReference>
<dbReference type="Bgee" id="ENSMUSG00000028688">
    <property type="expression patterns" value="Expressed in humerus cartilage element and 241 other cell types or tissues"/>
</dbReference>
<dbReference type="ExpressionAtlas" id="Q9D2E2">
    <property type="expression patterns" value="baseline and differential"/>
</dbReference>
<dbReference type="GO" id="GO:0015030">
    <property type="term" value="C:Cajal body"/>
    <property type="evidence" value="ECO:0007669"/>
    <property type="project" value="Ensembl"/>
</dbReference>
<dbReference type="GO" id="GO:0005737">
    <property type="term" value="C:cytoplasm"/>
    <property type="evidence" value="ECO:0007669"/>
    <property type="project" value="Ensembl"/>
</dbReference>
<dbReference type="GO" id="GO:0016607">
    <property type="term" value="C:nuclear speck"/>
    <property type="evidence" value="ECO:0007669"/>
    <property type="project" value="UniProtKB-SubCell"/>
</dbReference>
<dbReference type="GO" id="GO:0005730">
    <property type="term" value="C:nucleolus"/>
    <property type="evidence" value="ECO:0007669"/>
    <property type="project" value="UniProtKB-SubCell"/>
</dbReference>
<dbReference type="GO" id="GO:0004535">
    <property type="term" value="F:poly(A)-specific ribonuclease activity"/>
    <property type="evidence" value="ECO:0007669"/>
    <property type="project" value="Ensembl"/>
</dbReference>
<dbReference type="GO" id="GO:0017069">
    <property type="term" value="F:snRNA binding"/>
    <property type="evidence" value="ECO:0000250"/>
    <property type="project" value="UniProtKB"/>
</dbReference>
<dbReference type="GO" id="GO:0008270">
    <property type="term" value="F:zinc ion binding"/>
    <property type="evidence" value="ECO:0007669"/>
    <property type="project" value="UniProtKB-KW"/>
</dbReference>
<dbReference type="GO" id="GO:0034472">
    <property type="term" value="P:snRNA 3'-end processing"/>
    <property type="evidence" value="ECO:0000250"/>
    <property type="project" value="UniProtKB"/>
</dbReference>
<dbReference type="FunFam" id="3.30.420.10:FF:000039">
    <property type="entry name" value="Target of EGR1 protein 1"/>
    <property type="match status" value="1"/>
</dbReference>
<dbReference type="Gene3D" id="6.10.250.3220">
    <property type="match status" value="1"/>
</dbReference>
<dbReference type="Gene3D" id="3.30.420.10">
    <property type="entry name" value="Ribonuclease H-like superfamily/Ribonuclease H"/>
    <property type="match status" value="2"/>
</dbReference>
<dbReference type="InterPro" id="IPR051181">
    <property type="entry name" value="CAF1_poly(A)_ribonucleases"/>
</dbReference>
<dbReference type="InterPro" id="IPR006941">
    <property type="entry name" value="RNase_CAF1"/>
</dbReference>
<dbReference type="InterPro" id="IPR012337">
    <property type="entry name" value="RNaseH-like_sf"/>
</dbReference>
<dbReference type="InterPro" id="IPR036397">
    <property type="entry name" value="RNaseH_sf"/>
</dbReference>
<dbReference type="InterPro" id="IPR000571">
    <property type="entry name" value="Znf_CCCH"/>
</dbReference>
<dbReference type="PANTHER" id="PTHR15092">
    <property type="entry name" value="POLY A -SPECIFIC RIBONUCLEASE/TARGET OF EGR1, MEMBER 1"/>
    <property type="match status" value="1"/>
</dbReference>
<dbReference type="PANTHER" id="PTHR15092:SF37">
    <property type="entry name" value="TARGET OF EGR1 PROTEIN 1"/>
    <property type="match status" value="1"/>
</dbReference>
<dbReference type="Pfam" id="PF04857">
    <property type="entry name" value="CAF1"/>
    <property type="match status" value="2"/>
</dbReference>
<dbReference type="Pfam" id="PF00642">
    <property type="entry name" value="zf-CCCH"/>
    <property type="match status" value="1"/>
</dbReference>
<dbReference type="SUPFAM" id="SSF53098">
    <property type="entry name" value="Ribonuclease H-like"/>
    <property type="match status" value="1"/>
</dbReference>
<dbReference type="PROSITE" id="PS50103">
    <property type="entry name" value="ZF_C3H1"/>
    <property type="match status" value="1"/>
</dbReference>
<keyword id="KW-0007">Acetylation</keyword>
<keyword id="KW-0025">Alternative splicing</keyword>
<keyword id="KW-0479">Metal-binding</keyword>
<keyword id="KW-0539">Nucleus</keyword>
<keyword id="KW-0597">Phosphoprotein</keyword>
<keyword id="KW-1185">Reference proteome</keyword>
<keyword id="KW-0862">Zinc</keyword>
<keyword id="KW-0863">Zinc-finger</keyword>